<accession>Q3AUU4</accession>
<name>PEBB_SYNS9</name>
<evidence type="ECO:0000255" key="1">
    <source>
        <dbReference type="HAMAP-Rule" id="MF_00793"/>
    </source>
</evidence>
<feature type="chain" id="PRO_1000046932" description="Phycoerythrobilin:ferredoxin oxidoreductase">
    <location>
        <begin position="1"/>
        <end position="257"/>
    </location>
</feature>
<organism>
    <name type="scientific">Synechococcus sp. (strain CC9902)</name>
    <dbReference type="NCBI Taxonomy" id="316279"/>
    <lineage>
        <taxon>Bacteria</taxon>
        <taxon>Bacillati</taxon>
        <taxon>Cyanobacteriota</taxon>
        <taxon>Cyanophyceae</taxon>
        <taxon>Synechococcales</taxon>
        <taxon>Synechococcaceae</taxon>
        <taxon>Synechococcus</taxon>
    </lineage>
</organism>
<proteinExistence type="inferred from homology"/>
<comment type="function">
    <text evidence="1">Catalyzes the two-electron reduction of the C2 and C3(1) diene system of 15,16-dihydrobiliverdin.</text>
</comment>
<comment type="catalytic activity">
    <reaction evidence="1">
        <text>(3Z)-phycoerythrobilin + oxidized 2[4Fe-4S]-[ferredoxin] = 15,16-dihydrobiliverdin + reduced 2[4Fe-4S]-[ferredoxin] + 2 H(+)</text>
        <dbReference type="Rhea" id="RHEA:22092"/>
        <dbReference type="Rhea" id="RHEA-COMP:10002"/>
        <dbReference type="Rhea" id="RHEA-COMP:10004"/>
        <dbReference type="ChEBI" id="CHEBI:15378"/>
        <dbReference type="ChEBI" id="CHEBI:33722"/>
        <dbReference type="ChEBI" id="CHEBI:33723"/>
        <dbReference type="ChEBI" id="CHEBI:57438"/>
        <dbReference type="ChEBI" id="CHEBI:57899"/>
        <dbReference type="EC" id="1.3.7.3"/>
    </reaction>
</comment>
<comment type="similarity">
    <text evidence="1">Belongs to the HY2 family.</text>
</comment>
<sequence>MTTTRHSSTDSVNIPGWGWQPFLEDAVQALQPLNLEPYPVANDFLYKQDQTGSKAKPITVTTATWACKTDKFRQVRAACVYGGTAASVLNFVINPSARFDLPFFGGDLVTLPSGHLLALDLQPADKSDEAHTQQVWEKLIPIFERWRSKLPDGGPIPEEAQPFFSPGFLWTRLPLGDEGDQLINSVVRPAFNDYLSLYLELAEAAKPVGDDRRDHLLKGQRRYTDYRAEKDPARGMLTRFHGSDWTEKYIHTVLFDL</sequence>
<protein>
    <recommendedName>
        <fullName evidence="1">Phycoerythrobilin:ferredoxin oxidoreductase</fullName>
        <ecNumber evidence="1">1.3.7.3</ecNumber>
    </recommendedName>
</protein>
<reference key="1">
    <citation type="submission" date="2005-08" db="EMBL/GenBank/DDBJ databases">
        <title>Complete sequence of Synechococcus sp. CC9902.</title>
        <authorList>
            <person name="Copeland A."/>
            <person name="Lucas S."/>
            <person name="Lapidus A."/>
            <person name="Barry K."/>
            <person name="Detter J.C."/>
            <person name="Glavina T."/>
            <person name="Hammon N."/>
            <person name="Israni S."/>
            <person name="Pitluck S."/>
            <person name="Martinez M."/>
            <person name="Schmutz J."/>
            <person name="Larimer F."/>
            <person name="Land M."/>
            <person name="Kyrpides N."/>
            <person name="Ivanova N."/>
            <person name="Richardson P."/>
        </authorList>
    </citation>
    <scope>NUCLEOTIDE SEQUENCE [LARGE SCALE GENOMIC DNA]</scope>
    <source>
        <strain>CC9902</strain>
    </source>
</reference>
<gene>
    <name evidence="1" type="primary">pebB</name>
    <name type="ordered locus">Syncc9902_1907</name>
</gene>
<keyword id="KW-0560">Oxidoreductase</keyword>
<keyword id="KW-1185">Reference proteome</keyword>
<dbReference type="EC" id="1.3.7.3" evidence="1"/>
<dbReference type="EMBL" id="CP000097">
    <property type="protein sequence ID" value="ABB26864.1"/>
    <property type="molecule type" value="Genomic_DNA"/>
</dbReference>
<dbReference type="RefSeq" id="WP_011360666.1">
    <property type="nucleotide sequence ID" value="NC_007513.1"/>
</dbReference>
<dbReference type="SMR" id="Q3AUU4"/>
<dbReference type="STRING" id="316279.Syncc9902_1907"/>
<dbReference type="KEGG" id="sye:Syncc9902_1907"/>
<dbReference type="eggNOG" id="ENOG502Z8GK">
    <property type="taxonomic scope" value="Bacteria"/>
</dbReference>
<dbReference type="HOGENOM" id="CLU_086208_1_0_3"/>
<dbReference type="OrthoDB" id="421401at2"/>
<dbReference type="Proteomes" id="UP000002712">
    <property type="component" value="Chromosome"/>
</dbReference>
<dbReference type="GO" id="GO:0050897">
    <property type="term" value="F:cobalt ion binding"/>
    <property type="evidence" value="ECO:0007669"/>
    <property type="project" value="InterPro"/>
</dbReference>
<dbReference type="GO" id="GO:0050618">
    <property type="term" value="F:phycoerythrobilin:ferredoxin oxidoreductase activity"/>
    <property type="evidence" value="ECO:0007669"/>
    <property type="project" value="UniProtKB-UniRule"/>
</dbReference>
<dbReference type="GO" id="GO:0010024">
    <property type="term" value="P:phytochromobilin biosynthetic process"/>
    <property type="evidence" value="ECO:0007669"/>
    <property type="project" value="InterPro"/>
</dbReference>
<dbReference type="Gene3D" id="3.40.1500.20">
    <property type="match status" value="1"/>
</dbReference>
<dbReference type="HAMAP" id="MF_00793">
    <property type="entry name" value="PebB"/>
    <property type="match status" value="1"/>
</dbReference>
<dbReference type="InterPro" id="IPR009249">
    <property type="entry name" value="Ferredoxin-dep_bilin_Rdtase"/>
</dbReference>
<dbReference type="InterPro" id="IPR022827">
    <property type="entry name" value="Phycoerythrobilin_Fdx_Rdtase"/>
</dbReference>
<dbReference type="NCBIfam" id="NF009722">
    <property type="entry name" value="PRK13249.1"/>
    <property type="match status" value="1"/>
</dbReference>
<dbReference type="PANTHER" id="PTHR34557">
    <property type="entry name" value="PHYTOCHROMOBILIN:FERREDOXIN OXIDOREDUCTASE, CHLOROPLASTIC"/>
    <property type="match status" value="1"/>
</dbReference>
<dbReference type="PANTHER" id="PTHR34557:SF1">
    <property type="entry name" value="PHYTOCHROMOBILIN:FERREDOXIN OXIDOREDUCTASE, CHLOROPLASTIC"/>
    <property type="match status" value="1"/>
</dbReference>
<dbReference type="Pfam" id="PF05996">
    <property type="entry name" value="Fe_bilin_red"/>
    <property type="match status" value="1"/>
</dbReference>